<proteinExistence type="evidence at protein level"/>
<sequence>GLFKTLIKGAGKMLGHVAKEFLGSEGEPES</sequence>
<comment type="function">
    <text evidence="1">Has antimicrobial activity.</text>
</comment>
<comment type="subcellular location">
    <subcellularLocation>
        <location evidence="2">Secreted</location>
    </subcellularLocation>
</comment>
<comment type="tissue specificity">
    <text evidence="5">Expressed by the skin glands.</text>
</comment>
<comment type="mass spectrometry"/>
<comment type="similarity">
    <text evidence="4">Belongs to the frog skin active peptide (FSAP) family. Dermaseptin subfamily.</text>
</comment>
<name>DRS34_PHYTB</name>
<feature type="peptide" id="PRO_0000445216" description="Dermaseptin-3.4TR" evidence="2">
    <location>
        <begin position="1"/>
        <end position="30"/>
    </location>
</feature>
<protein>
    <recommendedName>
        <fullName evidence="3">Dermaseptin-3.4TR</fullName>
    </recommendedName>
</protein>
<keyword id="KW-0878">Amphibian defense peptide</keyword>
<keyword id="KW-0929">Antimicrobial</keyword>
<keyword id="KW-0903">Direct protein sequencing</keyword>
<keyword id="KW-0964">Secreted</keyword>
<dbReference type="SMR" id="C0HLC9"/>
<dbReference type="GO" id="GO:0005576">
    <property type="term" value="C:extracellular region"/>
    <property type="evidence" value="ECO:0007669"/>
    <property type="project" value="UniProtKB-SubCell"/>
</dbReference>
<dbReference type="GO" id="GO:0006952">
    <property type="term" value="P:defense response"/>
    <property type="evidence" value="ECO:0007669"/>
    <property type="project" value="UniProtKB-KW"/>
</dbReference>
<evidence type="ECO:0000250" key="1">
    <source>
        <dbReference type="UniProtKB" id="P84923"/>
    </source>
</evidence>
<evidence type="ECO:0000269" key="2">
    <source>
    </source>
</evidence>
<evidence type="ECO:0000303" key="3">
    <source>
    </source>
</evidence>
<evidence type="ECO:0000305" key="4"/>
<evidence type="ECO:0000305" key="5">
    <source>
    </source>
</evidence>
<organism evidence="3">
    <name type="scientific">Phyllomedusa trinitatis</name>
    <name type="common">Trinidad leaf frog</name>
    <dbReference type="NCBI Taxonomy" id="332092"/>
    <lineage>
        <taxon>Eukaryota</taxon>
        <taxon>Metazoa</taxon>
        <taxon>Chordata</taxon>
        <taxon>Craniata</taxon>
        <taxon>Vertebrata</taxon>
        <taxon>Euteleostomi</taxon>
        <taxon>Amphibia</taxon>
        <taxon>Batrachia</taxon>
        <taxon>Anura</taxon>
        <taxon>Neobatrachia</taxon>
        <taxon>Hyloidea</taxon>
        <taxon>Hylidae</taxon>
        <taxon>Phyllomedusinae</taxon>
        <taxon>Phyllomedusa</taxon>
    </lineage>
</organism>
<accession>C0HLC9</accession>
<reference evidence="4" key="1">
    <citation type="journal article" date="2018" name="Comp. Biochem. Physiol.">
        <title>Peptidomic analysis of the host-defense peptides in skin secretions of the Trinidadian leaf frog Phyllomedusa trinitatis (Phyllomedusidae).</title>
        <authorList>
            <person name="Mechkarska M."/>
            <person name="Coquet L."/>
            <person name="Leprince J."/>
            <person name="Auguste R.J."/>
            <person name="Jouenne T."/>
            <person name="Mangoni M.L."/>
            <person name="Conlon J.M."/>
        </authorList>
    </citation>
    <scope>PROTEIN SEQUENCE</scope>
    <scope>SUBCELLULAR LOCATION</scope>
    <scope>MASS SPECTROMETRY</scope>
    <source>
        <tissue evidence="3">Skin secretion</tissue>
    </source>
</reference>